<reference key="1">
    <citation type="journal article" date="2006" name="Nat. Biotechnol.">
        <title>Complete genome sequence of the entomopathogenic and metabolically versatile soil bacterium Pseudomonas entomophila.</title>
        <authorList>
            <person name="Vodovar N."/>
            <person name="Vallenet D."/>
            <person name="Cruveiller S."/>
            <person name="Rouy Z."/>
            <person name="Barbe V."/>
            <person name="Acosta C."/>
            <person name="Cattolico L."/>
            <person name="Jubin C."/>
            <person name="Lajus A."/>
            <person name="Segurens B."/>
            <person name="Vacherie B."/>
            <person name="Wincker P."/>
            <person name="Weissenbach J."/>
            <person name="Lemaitre B."/>
            <person name="Medigue C."/>
            <person name="Boccard F."/>
        </authorList>
    </citation>
    <scope>NUCLEOTIDE SEQUENCE [LARGE SCALE GENOMIC DNA]</scope>
    <source>
        <strain>L48</strain>
    </source>
</reference>
<evidence type="ECO:0000255" key="1">
    <source>
        <dbReference type="HAMAP-Rule" id="MF_00409"/>
    </source>
</evidence>
<gene>
    <name evidence="1" type="primary">lpxK</name>
    <name type="ordered locus">PSEEN1603</name>
</gene>
<organism>
    <name type="scientific">Pseudomonas entomophila (strain L48)</name>
    <dbReference type="NCBI Taxonomy" id="384676"/>
    <lineage>
        <taxon>Bacteria</taxon>
        <taxon>Pseudomonadati</taxon>
        <taxon>Pseudomonadota</taxon>
        <taxon>Gammaproteobacteria</taxon>
        <taxon>Pseudomonadales</taxon>
        <taxon>Pseudomonadaceae</taxon>
        <taxon>Pseudomonas</taxon>
    </lineage>
</organism>
<proteinExistence type="inferred from homology"/>
<dbReference type="EC" id="2.7.1.130" evidence="1"/>
<dbReference type="EMBL" id="CT573326">
    <property type="protein sequence ID" value="CAK14462.1"/>
    <property type="molecule type" value="Genomic_DNA"/>
</dbReference>
<dbReference type="RefSeq" id="WP_011532873.1">
    <property type="nucleotide sequence ID" value="NC_008027.1"/>
</dbReference>
<dbReference type="SMR" id="Q1ID01"/>
<dbReference type="STRING" id="384676.PSEEN1603"/>
<dbReference type="GeneID" id="32804847"/>
<dbReference type="KEGG" id="pen:PSEEN1603"/>
<dbReference type="eggNOG" id="COG1663">
    <property type="taxonomic scope" value="Bacteria"/>
</dbReference>
<dbReference type="HOGENOM" id="CLU_038816_2_0_6"/>
<dbReference type="OrthoDB" id="9766423at2"/>
<dbReference type="UniPathway" id="UPA00359">
    <property type="reaction ID" value="UER00482"/>
</dbReference>
<dbReference type="Proteomes" id="UP000000658">
    <property type="component" value="Chromosome"/>
</dbReference>
<dbReference type="GO" id="GO:0005886">
    <property type="term" value="C:plasma membrane"/>
    <property type="evidence" value="ECO:0007669"/>
    <property type="project" value="TreeGrafter"/>
</dbReference>
<dbReference type="GO" id="GO:0005524">
    <property type="term" value="F:ATP binding"/>
    <property type="evidence" value="ECO:0007669"/>
    <property type="project" value="UniProtKB-UniRule"/>
</dbReference>
<dbReference type="GO" id="GO:0009029">
    <property type="term" value="F:tetraacyldisaccharide 4'-kinase activity"/>
    <property type="evidence" value="ECO:0007669"/>
    <property type="project" value="UniProtKB-UniRule"/>
</dbReference>
<dbReference type="GO" id="GO:0009245">
    <property type="term" value="P:lipid A biosynthetic process"/>
    <property type="evidence" value="ECO:0007669"/>
    <property type="project" value="UniProtKB-UniRule"/>
</dbReference>
<dbReference type="GO" id="GO:0009244">
    <property type="term" value="P:lipopolysaccharide core region biosynthetic process"/>
    <property type="evidence" value="ECO:0007669"/>
    <property type="project" value="TreeGrafter"/>
</dbReference>
<dbReference type="HAMAP" id="MF_00409">
    <property type="entry name" value="LpxK"/>
    <property type="match status" value="1"/>
</dbReference>
<dbReference type="InterPro" id="IPR003758">
    <property type="entry name" value="LpxK"/>
</dbReference>
<dbReference type="InterPro" id="IPR027417">
    <property type="entry name" value="P-loop_NTPase"/>
</dbReference>
<dbReference type="NCBIfam" id="TIGR00682">
    <property type="entry name" value="lpxK"/>
    <property type="match status" value="1"/>
</dbReference>
<dbReference type="PANTHER" id="PTHR42724">
    <property type="entry name" value="TETRAACYLDISACCHARIDE 4'-KINASE"/>
    <property type="match status" value="1"/>
</dbReference>
<dbReference type="PANTHER" id="PTHR42724:SF1">
    <property type="entry name" value="TETRAACYLDISACCHARIDE 4'-KINASE, MITOCHONDRIAL-RELATED"/>
    <property type="match status" value="1"/>
</dbReference>
<dbReference type="Pfam" id="PF02606">
    <property type="entry name" value="LpxK"/>
    <property type="match status" value="1"/>
</dbReference>
<dbReference type="SUPFAM" id="SSF52540">
    <property type="entry name" value="P-loop containing nucleoside triphosphate hydrolases"/>
    <property type="match status" value="1"/>
</dbReference>
<keyword id="KW-0067">ATP-binding</keyword>
<keyword id="KW-0418">Kinase</keyword>
<keyword id="KW-0441">Lipid A biosynthesis</keyword>
<keyword id="KW-0444">Lipid biosynthesis</keyword>
<keyword id="KW-0443">Lipid metabolism</keyword>
<keyword id="KW-0547">Nucleotide-binding</keyword>
<keyword id="KW-0808">Transferase</keyword>
<sequence length="336" mass="36921">MAFADRLLAAWYAGHPALALLRPLEALYRRVVTRKRARFLSGESASYRAPVPVIVVGNITVGGTGKTPMILWLIEHCRRQGLKVGVVSRGYGAKPPQHPWHVQADQPAEQAGDEPLLIVQRTGVPLVIDPDRSRAVQALLASDAPDLILCDDGMQHYRLARDLELVLIDAVRGLGNRRCLPAGPLREPAERLGEADAVLFNGAEADRDDGFSFRLQPSALINLRSGERRALDLFPAGQALHAVAGIGNPQRFFNTLLGLNWQPVPHPFADHAPYSREVLSFSPPLPLVMTEKDAVKCRPFAADDWWYLAVDAVPSAAFSAWFDGQLDRLLPGRPRP</sequence>
<feature type="chain" id="PRO_0000291226" description="Tetraacyldisaccharide 4'-kinase">
    <location>
        <begin position="1"/>
        <end position="336"/>
    </location>
</feature>
<feature type="binding site" evidence="1">
    <location>
        <begin position="60"/>
        <end position="67"/>
    </location>
    <ligand>
        <name>ATP</name>
        <dbReference type="ChEBI" id="CHEBI:30616"/>
    </ligand>
</feature>
<name>LPXK_PSEE4</name>
<protein>
    <recommendedName>
        <fullName evidence="1">Tetraacyldisaccharide 4'-kinase</fullName>
        <ecNumber evidence="1">2.7.1.130</ecNumber>
    </recommendedName>
    <alternativeName>
        <fullName evidence="1">Lipid A 4'-kinase</fullName>
    </alternativeName>
</protein>
<comment type="function">
    <text evidence="1">Transfers the gamma-phosphate of ATP to the 4'-position of a tetraacyldisaccharide 1-phosphate intermediate (termed DS-1-P) to form tetraacyldisaccharide 1,4'-bis-phosphate (lipid IVA).</text>
</comment>
<comment type="catalytic activity">
    <reaction evidence="1">
        <text>a lipid A disaccharide + ATP = a lipid IVA + ADP + H(+)</text>
        <dbReference type="Rhea" id="RHEA:67840"/>
        <dbReference type="ChEBI" id="CHEBI:15378"/>
        <dbReference type="ChEBI" id="CHEBI:30616"/>
        <dbReference type="ChEBI" id="CHEBI:176343"/>
        <dbReference type="ChEBI" id="CHEBI:176425"/>
        <dbReference type="ChEBI" id="CHEBI:456216"/>
        <dbReference type="EC" id="2.7.1.130"/>
    </reaction>
</comment>
<comment type="pathway">
    <text evidence="1">Glycolipid biosynthesis; lipid IV(A) biosynthesis; lipid IV(A) from (3R)-3-hydroxytetradecanoyl-[acyl-carrier-protein] and UDP-N-acetyl-alpha-D-glucosamine: step 6/6.</text>
</comment>
<comment type="similarity">
    <text evidence="1">Belongs to the LpxK family.</text>
</comment>
<accession>Q1ID01</accession>